<accession>Q31L07</accession>
<reference key="1">
    <citation type="submission" date="2005-08" db="EMBL/GenBank/DDBJ databases">
        <title>Complete sequence of chromosome 1 of Synechococcus elongatus PCC 7942.</title>
        <authorList>
            <consortium name="US DOE Joint Genome Institute"/>
            <person name="Copeland A."/>
            <person name="Lucas S."/>
            <person name="Lapidus A."/>
            <person name="Barry K."/>
            <person name="Detter J.C."/>
            <person name="Glavina T."/>
            <person name="Hammon N."/>
            <person name="Israni S."/>
            <person name="Pitluck S."/>
            <person name="Schmutz J."/>
            <person name="Larimer F."/>
            <person name="Land M."/>
            <person name="Kyrpides N."/>
            <person name="Lykidis A."/>
            <person name="Golden S."/>
            <person name="Richardson P."/>
        </authorList>
    </citation>
    <scope>NUCLEOTIDE SEQUENCE [LARGE SCALE GENOMIC DNA]</scope>
    <source>
        <strain>ATCC 33912 / PCC 7942 / FACHB-805</strain>
    </source>
</reference>
<feature type="chain" id="PRO_0000241425" description="Large ribosomal subunit protein uL3">
    <location>
        <begin position="1"/>
        <end position="213"/>
    </location>
</feature>
<feature type="region of interest" description="Disordered" evidence="2">
    <location>
        <begin position="131"/>
        <end position="168"/>
    </location>
</feature>
<comment type="function">
    <text evidence="1">One of the primary rRNA binding proteins, it binds directly near the 3'-end of the 23S rRNA, where it nucleates assembly of the 50S subunit.</text>
</comment>
<comment type="subunit">
    <text evidence="1">Part of the 50S ribosomal subunit. Forms a cluster with proteins L14 and L19.</text>
</comment>
<comment type="similarity">
    <text evidence="1">Belongs to the universal ribosomal protein uL3 family.</text>
</comment>
<keyword id="KW-1185">Reference proteome</keyword>
<keyword id="KW-0687">Ribonucleoprotein</keyword>
<keyword id="KW-0689">Ribosomal protein</keyword>
<keyword id="KW-0694">RNA-binding</keyword>
<keyword id="KW-0699">rRNA-binding</keyword>
<sequence length="213" mass="22452">MSIGILGTKLGMTQIFDESGKAVPVTVIQAGPCPITQIKTVATDGYNAIQIGFLEVREKQLSKPELGHLSKAGAPPLRHLLEYRVPSTDGLELGQALTADRFEAGQKVDVQGHTIGRGFTGYQKRHGFARGPMSHGSKNHRLPGSTGAGTTPGRVYPGKRMAGRSGNDKTTIRGLTVVRVDADRNLLLVKGSVPGKPGALLNITPATVVGQQA</sequence>
<organism>
    <name type="scientific">Synechococcus elongatus (strain ATCC 33912 / PCC 7942 / FACHB-805)</name>
    <name type="common">Anacystis nidulans R2</name>
    <dbReference type="NCBI Taxonomy" id="1140"/>
    <lineage>
        <taxon>Bacteria</taxon>
        <taxon>Bacillati</taxon>
        <taxon>Cyanobacteriota</taxon>
        <taxon>Cyanophyceae</taxon>
        <taxon>Synechococcales</taxon>
        <taxon>Synechococcaceae</taxon>
        <taxon>Synechococcus</taxon>
    </lineage>
</organism>
<name>RL3_SYNE7</name>
<protein>
    <recommendedName>
        <fullName evidence="1">Large ribosomal subunit protein uL3</fullName>
    </recommendedName>
    <alternativeName>
        <fullName evidence="3">50S ribosomal protein L3</fullName>
    </alternativeName>
</protein>
<dbReference type="EMBL" id="CP000100">
    <property type="protein sequence ID" value="ABB58262.1"/>
    <property type="molecule type" value="Genomic_DNA"/>
</dbReference>
<dbReference type="RefSeq" id="WP_011244175.1">
    <property type="nucleotide sequence ID" value="NZ_JACJTX010000001.1"/>
</dbReference>
<dbReference type="SMR" id="Q31L07"/>
<dbReference type="STRING" id="1140.Synpcc7942_2232"/>
<dbReference type="PaxDb" id="1140-Synpcc7942_2232"/>
<dbReference type="GeneID" id="72431115"/>
<dbReference type="KEGG" id="syf:Synpcc7942_2232"/>
<dbReference type="eggNOG" id="COG0087">
    <property type="taxonomic scope" value="Bacteria"/>
</dbReference>
<dbReference type="HOGENOM" id="CLU_044142_4_1_3"/>
<dbReference type="OrthoDB" id="9806135at2"/>
<dbReference type="BioCyc" id="SYNEL:SYNPCC7942_2232-MONOMER"/>
<dbReference type="Proteomes" id="UP000889800">
    <property type="component" value="Chromosome"/>
</dbReference>
<dbReference type="GO" id="GO:0022625">
    <property type="term" value="C:cytosolic large ribosomal subunit"/>
    <property type="evidence" value="ECO:0007669"/>
    <property type="project" value="TreeGrafter"/>
</dbReference>
<dbReference type="GO" id="GO:0019843">
    <property type="term" value="F:rRNA binding"/>
    <property type="evidence" value="ECO:0007669"/>
    <property type="project" value="UniProtKB-UniRule"/>
</dbReference>
<dbReference type="GO" id="GO:0003735">
    <property type="term" value="F:structural constituent of ribosome"/>
    <property type="evidence" value="ECO:0007669"/>
    <property type="project" value="InterPro"/>
</dbReference>
<dbReference type="GO" id="GO:0006412">
    <property type="term" value="P:translation"/>
    <property type="evidence" value="ECO:0007669"/>
    <property type="project" value="UniProtKB-UniRule"/>
</dbReference>
<dbReference type="FunFam" id="3.30.160.810:FF:000001">
    <property type="entry name" value="50S ribosomal protein L3"/>
    <property type="match status" value="1"/>
</dbReference>
<dbReference type="FunFam" id="2.40.30.10:FF:000065">
    <property type="entry name" value="50S ribosomal protein L3, chloroplastic"/>
    <property type="match status" value="1"/>
</dbReference>
<dbReference type="Gene3D" id="3.30.160.810">
    <property type="match status" value="1"/>
</dbReference>
<dbReference type="Gene3D" id="2.40.30.10">
    <property type="entry name" value="Translation factors"/>
    <property type="match status" value="1"/>
</dbReference>
<dbReference type="HAMAP" id="MF_01325_B">
    <property type="entry name" value="Ribosomal_uL3_B"/>
    <property type="match status" value="1"/>
</dbReference>
<dbReference type="InterPro" id="IPR000597">
    <property type="entry name" value="Ribosomal_uL3"/>
</dbReference>
<dbReference type="InterPro" id="IPR019927">
    <property type="entry name" value="Ribosomal_uL3_bac/org-type"/>
</dbReference>
<dbReference type="InterPro" id="IPR019926">
    <property type="entry name" value="Ribosomal_uL3_CS"/>
</dbReference>
<dbReference type="InterPro" id="IPR009000">
    <property type="entry name" value="Transl_B-barrel_sf"/>
</dbReference>
<dbReference type="NCBIfam" id="TIGR03625">
    <property type="entry name" value="L3_bact"/>
    <property type="match status" value="1"/>
</dbReference>
<dbReference type="PANTHER" id="PTHR11229">
    <property type="entry name" value="50S RIBOSOMAL PROTEIN L3"/>
    <property type="match status" value="1"/>
</dbReference>
<dbReference type="PANTHER" id="PTHR11229:SF16">
    <property type="entry name" value="LARGE RIBOSOMAL SUBUNIT PROTEIN UL3C"/>
    <property type="match status" value="1"/>
</dbReference>
<dbReference type="Pfam" id="PF00297">
    <property type="entry name" value="Ribosomal_L3"/>
    <property type="match status" value="1"/>
</dbReference>
<dbReference type="SUPFAM" id="SSF50447">
    <property type="entry name" value="Translation proteins"/>
    <property type="match status" value="1"/>
</dbReference>
<dbReference type="PROSITE" id="PS00474">
    <property type="entry name" value="RIBOSOMAL_L3"/>
    <property type="match status" value="1"/>
</dbReference>
<proteinExistence type="inferred from homology"/>
<gene>
    <name evidence="1" type="primary">rplC</name>
    <name evidence="1" type="synonym">rpl3</name>
    <name type="ordered locus">Synpcc7942_2232</name>
</gene>
<evidence type="ECO:0000255" key="1">
    <source>
        <dbReference type="HAMAP-Rule" id="MF_01325"/>
    </source>
</evidence>
<evidence type="ECO:0000256" key="2">
    <source>
        <dbReference type="SAM" id="MobiDB-lite"/>
    </source>
</evidence>
<evidence type="ECO:0000305" key="3"/>